<accession>O80526</accession>
<feature type="chain" id="PRO_0000412217" description="ATP-citrate synthase alpha chain protein 3">
    <location>
        <begin position="1"/>
        <end position="424"/>
    </location>
</feature>
<feature type="binding site" evidence="1">
    <location>
        <position position="343"/>
    </location>
    <ligand>
        <name>citrate</name>
        <dbReference type="ChEBI" id="CHEBI:16947"/>
    </ligand>
</feature>
<feature type="binding site" evidence="1">
    <location>
        <position position="345"/>
    </location>
    <ligand>
        <name>citrate</name>
        <dbReference type="ChEBI" id="CHEBI:16947"/>
    </ligand>
</feature>
<feature type="binding site" evidence="1">
    <location>
        <position position="376"/>
    </location>
    <ligand>
        <name>citrate</name>
        <dbReference type="ChEBI" id="CHEBI:16947"/>
    </ligand>
</feature>
<protein>
    <recommendedName>
        <fullName>ATP-citrate synthase alpha chain protein 3</fullName>
        <shortName>ATP-citrate synthase A-3</shortName>
        <ecNumber>2.3.3.8</ecNumber>
    </recommendedName>
    <alternativeName>
        <fullName>ATP-citrate lyase A-3</fullName>
    </alternativeName>
    <alternativeName>
        <fullName>Citrate cleavage enzyme A-3</fullName>
    </alternativeName>
</protein>
<proteinExistence type="evidence at transcript level"/>
<organism>
    <name type="scientific">Arabidopsis thaliana</name>
    <name type="common">Mouse-ear cress</name>
    <dbReference type="NCBI Taxonomy" id="3702"/>
    <lineage>
        <taxon>Eukaryota</taxon>
        <taxon>Viridiplantae</taxon>
        <taxon>Streptophyta</taxon>
        <taxon>Embryophyta</taxon>
        <taxon>Tracheophyta</taxon>
        <taxon>Spermatophyta</taxon>
        <taxon>Magnoliopsida</taxon>
        <taxon>eudicotyledons</taxon>
        <taxon>Gunneridae</taxon>
        <taxon>Pentapetalae</taxon>
        <taxon>rosids</taxon>
        <taxon>malvids</taxon>
        <taxon>Brassicales</taxon>
        <taxon>Brassicaceae</taxon>
        <taxon>Camelineae</taxon>
        <taxon>Arabidopsis</taxon>
    </lineage>
</organism>
<name>ACLA3_ARATH</name>
<comment type="function">
    <text evidence="1">ATP citrate-lyase is the primary enzyme responsible for the synthesis of cytosolic acetyl-CoA, used for the elongation of fatty acids and biosynthesis of isoprenoids, flavonoids and malonated derivatives. May supply substrate to the cytosolic acetyl-CoA carboxylase, which generates the malonyl-CoA used for the synthesis of a multitude of compounds, including very long chain fatty acids and flavonoids. Required for normal growth and development and elongation of C18 fatty acids to C20 to C24 fatty acids in seeds. In contrast to all known animal ACL enzymes having a homomeric structure, plant ACLs are composed of alpha and beta chains (By similarity).</text>
</comment>
<comment type="catalytic activity">
    <reaction>
        <text>oxaloacetate + acetyl-CoA + ADP + phosphate = citrate + ATP + CoA</text>
        <dbReference type="Rhea" id="RHEA:21160"/>
        <dbReference type="ChEBI" id="CHEBI:16452"/>
        <dbReference type="ChEBI" id="CHEBI:16947"/>
        <dbReference type="ChEBI" id="CHEBI:30616"/>
        <dbReference type="ChEBI" id="CHEBI:43474"/>
        <dbReference type="ChEBI" id="CHEBI:57287"/>
        <dbReference type="ChEBI" id="CHEBI:57288"/>
        <dbReference type="ChEBI" id="CHEBI:456216"/>
        <dbReference type="EC" id="2.3.3.8"/>
    </reaction>
</comment>
<comment type="subunit">
    <text evidence="1">Heterooctamer of 4 alpha and 4 beta chains.</text>
</comment>
<comment type="subcellular location">
    <subcellularLocation>
        <location evidence="1">Cytoplasm</location>
        <location evidence="1">Cytosol</location>
    </subcellularLocation>
</comment>
<comment type="similarity">
    <text evidence="2">Belongs to the succinate/malate CoA ligase beta subunit family.</text>
</comment>
<reference key="1">
    <citation type="journal article" date="2000" name="Nature">
        <title>Sequence and analysis of chromosome 1 of the plant Arabidopsis thaliana.</title>
        <authorList>
            <person name="Theologis A."/>
            <person name="Ecker J.R."/>
            <person name="Palm C.J."/>
            <person name="Federspiel N.A."/>
            <person name="Kaul S."/>
            <person name="White O."/>
            <person name="Alonso J."/>
            <person name="Altafi H."/>
            <person name="Araujo R."/>
            <person name="Bowman C.L."/>
            <person name="Brooks S.Y."/>
            <person name="Buehler E."/>
            <person name="Chan A."/>
            <person name="Chao Q."/>
            <person name="Chen H."/>
            <person name="Cheuk R.F."/>
            <person name="Chin C.W."/>
            <person name="Chung M.K."/>
            <person name="Conn L."/>
            <person name="Conway A.B."/>
            <person name="Conway A.R."/>
            <person name="Creasy T.H."/>
            <person name="Dewar K."/>
            <person name="Dunn P."/>
            <person name="Etgu P."/>
            <person name="Feldblyum T.V."/>
            <person name="Feng J.-D."/>
            <person name="Fong B."/>
            <person name="Fujii C.Y."/>
            <person name="Gill J.E."/>
            <person name="Goldsmith A.D."/>
            <person name="Haas B."/>
            <person name="Hansen N.F."/>
            <person name="Hughes B."/>
            <person name="Huizar L."/>
            <person name="Hunter J.L."/>
            <person name="Jenkins J."/>
            <person name="Johnson-Hopson C."/>
            <person name="Khan S."/>
            <person name="Khaykin E."/>
            <person name="Kim C.J."/>
            <person name="Koo H.L."/>
            <person name="Kremenetskaia I."/>
            <person name="Kurtz D.B."/>
            <person name="Kwan A."/>
            <person name="Lam B."/>
            <person name="Langin-Hooper S."/>
            <person name="Lee A."/>
            <person name="Lee J.M."/>
            <person name="Lenz C.A."/>
            <person name="Li J.H."/>
            <person name="Li Y.-P."/>
            <person name="Lin X."/>
            <person name="Liu S.X."/>
            <person name="Liu Z.A."/>
            <person name="Luros J.S."/>
            <person name="Maiti R."/>
            <person name="Marziali A."/>
            <person name="Militscher J."/>
            <person name="Miranda M."/>
            <person name="Nguyen M."/>
            <person name="Nierman W.C."/>
            <person name="Osborne B.I."/>
            <person name="Pai G."/>
            <person name="Peterson J."/>
            <person name="Pham P.K."/>
            <person name="Rizzo M."/>
            <person name="Rooney T."/>
            <person name="Rowley D."/>
            <person name="Sakano H."/>
            <person name="Salzberg S.L."/>
            <person name="Schwartz J.R."/>
            <person name="Shinn P."/>
            <person name="Southwick A.M."/>
            <person name="Sun H."/>
            <person name="Tallon L.J."/>
            <person name="Tambunga G."/>
            <person name="Toriumi M.J."/>
            <person name="Town C.D."/>
            <person name="Utterback T."/>
            <person name="Van Aken S."/>
            <person name="Vaysberg M."/>
            <person name="Vysotskaia V.S."/>
            <person name="Walker M."/>
            <person name="Wu D."/>
            <person name="Yu G."/>
            <person name="Fraser C.M."/>
            <person name="Venter J.C."/>
            <person name="Davis R.W."/>
        </authorList>
    </citation>
    <scope>NUCLEOTIDE SEQUENCE [LARGE SCALE GENOMIC DNA]</scope>
    <source>
        <strain>cv. Columbia</strain>
    </source>
</reference>
<reference key="2">
    <citation type="journal article" date="2017" name="Plant J.">
        <title>Araport11: a complete reannotation of the Arabidopsis thaliana reference genome.</title>
        <authorList>
            <person name="Cheng C.Y."/>
            <person name="Krishnakumar V."/>
            <person name="Chan A.P."/>
            <person name="Thibaud-Nissen F."/>
            <person name="Schobel S."/>
            <person name="Town C.D."/>
        </authorList>
    </citation>
    <scope>GENOME REANNOTATION</scope>
    <source>
        <strain>cv. Columbia</strain>
    </source>
</reference>
<reference key="3">
    <citation type="journal article" date="2003" name="Science">
        <title>Empirical analysis of transcriptional activity in the Arabidopsis genome.</title>
        <authorList>
            <person name="Yamada K."/>
            <person name="Lim J."/>
            <person name="Dale J.M."/>
            <person name="Chen H."/>
            <person name="Shinn P."/>
            <person name="Palm C.J."/>
            <person name="Southwick A.M."/>
            <person name="Wu H.C."/>
            <person name="Kim C.J."/>
            <person name="Nguyen M."/>
            <person name="Pham P.K."/>
            <person name="Cheuk R.F."/>
            <person name="Karlin-Newmann G."/>
            <person name="Liu S.X."/>
            <person name="Lam B."/>
            <person name="Sakano H."/>
            <person name="Wu T."/>
            <person name="Yu G."/>
            <person name="Miranda M."/>
            <person name="Quach H.L."/>
            <person name="Tripp M."/>
            <person name="Chang C.H."/>
            <person name="Lee J.M."/>
            <person name="Toriumi M.J."/>
            <person name="Chan M.M."/>
            <person name="Tang C.C."/>
            <person name="Onodera C.S."/>
            <person name="Deng J.M."/>
            <person name="Akiyama K."/>
            <person name="Ansari Y."/>
            <person name="Arakawa T."/>
            <person name="Banh J."/>
            <person name="Banno F."/>
            <person name="Bowser L."/>
            <person name="Brooks S.Y."/>
            <person name="Carninci P."/>
            <person name="Chao Q."/>
            <person name="Choy N."/>
            <person name="Enju A."/>
            <person name="Goldsmith A.D."/>
            <person name="Gurjal M."/>
            <person name="Hansen N.F."/>
            <person name="Hayashizaki Y."/>
            <person name="Johnson-Hopson C."/>
            <person name="Hsuan V.W."/>
            <person name="Iida K."/>
            <person name="Karnes M."/>
            <person name="Khan S."/>
            <person name="Koesema E."/>
            <person name="Ishida J."/>
            <person name="Jiang P.X."/>
            <person name="Jones T."/>
            <person name="Kawai J."/>
            <person name="Kamiya A."/>
            <person name="Meyers C."/>
            <person name="Nakajima M."/>
            <person name="Narusaka M."/>
            <person name="Seki M."/>
            <person name="Sakurai T."/>
            <person name="Satou M."/>
            <person name="Tamse R."/>
            <person name="Vaysberg M."/>
            <person name="Wallender E.K."/>
            <person name="Wong C."/>
            <person name="Yamamura Y."/>
            <person name="Yuan S."/>
            <person name="Shinozaki K."/>
            <person name="Davis R.W."/>
            <person name="Theologis A."/>
            <person name="Ecker J.R."/>
        </authorList>
    </citation>
    <scope>NUCLEOTIDE SEQUENCE [LARGE SCALE MRNA]</scope>
    <source>
        <strain>cv. Columbia</strain>
    </source>
</reference>
<gene>
    <name type="primary">ACLA-3</name>
    <name type="ordered locus">At1g09430</name>
    <name type="ORF">F19J9.9</name>
</gene>
<sequence>MARKKIREYDSKRLLKEHLKRLANIDLQIRSAQVTESTDFTELTNQESWLSSTKLVVKPDMLFGKRGKSGLVALKLDLAEVADFVKARLGTEVEMEGCKAPITTFIVEPFVPHDQEYYLSIVSDRLGCTISFSECGGIEIEENWDKVKTIFLPAEKSMTLEVCAPLIATLPLEVRAKIGNFIMGAFAVFQDLDFSFMEMNPFTLVDGEPFPLDMRGELDDTAAFKNFNKWGDIEFPLPFGRVLSSTENFIHGLDEKTSASLKFTVLNPKGRIWTMVAGGGASVIYADTVGDLGYASELGNYAEYSGAPNEEEVLQYARVVIDCATTDPDGRKRALLIGGGIANFTDVAATFNGIIRALREKETRLKASRMHIYVRRGGPNYQTGLARMRALGEELGVPLEVYGPEATMTGICKRAIDCIMLPDA</sequence>
<keyword id="KW-0012">Acyltransferase</keyword>
<keyword id="KW-0067">ATP-binding</keyword>
<keyword id="KW-0963">Cytoplasm</keyword>
<keyword id="KW-0444">Lipid biosynthesis</keyword>
<keyword id="KW-0443">Lipid metabolism</keyword>
<keyword id="KW-0547">Nucleotide-binding</keyword>
<keyword id="KW-1185">Reference proteome</keyword>
<keyword id="KW-0808">Transferase</keyword>
<dbReference type="EC" id="2.3.3.8"/>
<dbReference type="EMBL" id="AC003970">
    <property type="protein sequence ID" value="AAC33203.1"/>
    <property type="molecule type" value="Genomic_DNA"/>
</dbReference>
<dbReference type="EMBL" id="CP002684">
    <property type="protein sequence ID" value="AEE28442.1"/>
    <property type="molecule type" value="Genomic_DNA"/>
</dbReference>
<dbReference type="EMBL" id="AY127019">
    <property type="protein sequence ID" value="AAM83243.1"/>
    <property type="molecule type" value="mRNA"/>
</dbReference>
<dbReference type="EMBL" id="BT003017">
    <property type="protein sequence ID" value="AAO23582.1"/>
    <property type="molecule type" value="mRNA"/>
</dbReference>
<dbReference type="PIR" id="F86227">
    <property type="entry name" value="F86227"/>
</dbReference>
<dbReference type="RefSeq" id="NP_172414.1">
    <property type="nucleotide sequence ID" value="NM_100814.4"/>
</dbReference>
<dbReference type="SMR" id="O80526"/>
<dbReference type="BioGRID" id="22707">
    <property type="interactions" value="1"/>
</dbReference>
<dbReference type="FunCoup" id="O80526">
    <property type="interactions" value="278"/>
</dbReference>
<dbReference type="IntAct" id="O80526">
    <property type="interactions" value="1"/>
</dbReference>
<dbReference type="STRING" id="3702.O80526"/>
<dbReference type="iPTMnet" id="O80526"/>
<dbReference type="PaxDb" id="3702-AT1G09430.1"/>
<dbReference type="ProteomicsDB" id="244644"/>
<dbReference type="EnsemblPlants" id="AT1G09430.1">
    <property type="protein sequence ID" value="AT1G09430.1"/>
    <property type="gene ID" value="AT1G09430"/>
</dbReference>
<dbReference type="GeneID" id="837466"/>
<dbReference type="Gramene" id="AT1G09430.1">
    <property type="protein sequence ID" value="AT1G09430.1"/>
    <property type="gene ID" value="AT1G09430"/>
</dbReference>
<dbReference type="KEGG" id="ath:AT1G09430"/>
<dbReference type="Araport" id="AT1G09430"/>
<dbReference type="TAIR" id="AT1G09430">
    <property type="gene designation" value="ACLA-3"/>
</dbReference>
<dbReference type="eggNOG" id="KOG1254">
    <property type="taxonomic scope" value="Eukaryota"/>
</dbReference>
<dbReference type="HOGENOM" id="CLU_006587_3_1_1"/>
<dbReference type="InParanoid" id="O80526"/>
<dbReference type="OMA" id="DMHVSGI"/>
<dbReference type="PhylomeDB" id="O80526"/>
<dbReference type="PRO" id="PR:O80526"/>
<dbReference type="Proteomes" id="UP000006548">
    <property type="component" value="Chromosome 1"/>
</dbReference>
<dbReference type="ExpressionAtlas" id="O80526">
    <property type="expression patterns" value="baseline and differential"/>
</dbReference>
<dbReference type="GO" id="GO:0005829">
    <property type="term" value="C:cytosol"/>
    <property type="evidence" value="ECO:0007005"/>
    <property type="project" value="TAIR"/>
</dbReference>
<dbReference type="GO" id="GO:0005576">
    <property type="term" value="C:extracellular region"/>
    <property type="evidence" value="ECO:0007005"/>
    <property type="project" value="TAIR"/>
</dbReference>
<dbReference type="GO" id="GO:0005524">
    <property type="term" value="F:ATP binding"/>
    <property type="evidence" value="ECO:0007669"/>
    <property type="project" value="UniProtKB-KW"/>
</dbReference>
<dbReference type="GO" id="GO:0003878">
    <property type="term" value="F:ATP citrate synthase activity"/>
    <property type="evidence" value="ECO:0000250"/>
    <property type="project" value="TAIR"/>
</dbReference>
<dbReference type="GO" id="GO:0006085">
    <property type="term" value="P:acetyl-CoA biosynthetic process"/>
    <property type="evidence" value="ECO:0000304"/>
    <property type="project" value="TAIR"/>
</dbReference>
<dbReference type="GO" id="GO:0006629">
    <property type="term" value="P:lipid metabolic process"/>
    <property type="evidence" value="ECO:0007669"/>
    <property type="project" value="UniProtKB-KW"/>
</dbReference>
<dbReference type="FunFam" id="3.30.470.110:FF:000002">
    <property type="entry name" value="ATP-citrate synthase alpha chain protein"/>
    <property type="match status" value="1"/>
</dbReference>
<dbReference type="FunFam" id="3.40.50.261:FF:000008">
    <property type="entry name" value="ATP-citrate synthase alpha chain protein"/>
    <property type="match status" value="1"/>
</dbReference>
<dbReference type="Gene3D" id="3.30.470.110">
    <property type="match status" value="1"/>
</dbReference>
<dbReference type="Gene3D" id="3.40.50.261">
    <property type="entry name" value="Succinyl-CoA synthetase domains"/>
    <property type="match status" value="1"/>
</dbReference>
<dbReference type="InterPro" id="IPR032263">
    <property type="entry name" value="Citrate-bd"/>
</dbReference>
<dbReference type="InterPro" id="IPR056749">
    <property type="entry name" value="Citrate_synth_N"/>
</dbReference>
<dbReference type="InterPro" id="IPR016102">
    <property type="entry name" value="Succinyl-CoA_synth-like"/>
</dbReference>
<dbReference type="PANTHER" id="PTHR11815:SF10">
    <property type="entry name" value="SUCCINATE--COA LIGASE [GDP-FORMING] SUBUNIT BETA, MITOCHONDRIAL"/>
    <property type="match status" value="1"/>
</dbReference>
<dbReference type="PANTHER" id="PTHR11815">
    <property type="entry name" value="SUCCINYL-COA SYNTHETASE BETA CHAIN"/>
    <property type="match status" value="1"/>
</dbReference>
<dbReference type="Pfam" id="PF16114">
    <property type="entry name" value="Citrate_bind"/>
    <property type="match status" value="1"/>
</dbReference>
<dbReference type="Pfam" id="PF24948">
    <property type="entry name" value="Citrate_synth_N"/>
    <property type="match status" value="1"/>
</dbReference>
<dbReference type="SUPFAM" id="SSF56059">
    <property type="entry name" value="Glutathione synthetase ATP-binding domain-like"/>
    <property type="match status" value="1"/>
</dbReference>
<dbReference type="SUPFAM" id="SSF52210">
    <property type="entry name" value="Succinyl-CoA synthetase domains"/>
    <property type="match status" value="1"/>
</dbReference>
<evidence type="ECO:0000250" key="1"/>
<evidence type="ECO:0000305" key="2"/>